<name>USPE_ECOLI</name>
<gene>
    <name type="primary">uspE</name>
    <name type="synonym">ydaA</name>
    <name type="ordered locus">b1333</name>
    <name type="ordered locus">JW1327</name>
</gene>
<feature type="initiator methionine" description="Removed" evidence="3">
    <location>
        <position position="1"/>
    </location>
</feature>
<feature type="chain" id="PRO_0000147417" description="Universal stress protein E">
    <location>
        <begin position="2"/>
        <end position="316"/>
    </location>
</feature>
<feature type="sequence conflict" description="In Ref. 4; AAA87982." evidence="4" ref="4">
    <location>
        <position position="55"/>
    </location>
</feature>
<feature type="sequence conflict" description="In Ref. 4." evidence="4" ref="4">
    <original>AMRQGVISQRTAWIH</original>
    <variation>RYASGRHQPAYSLDP</variation>
    <location>
        <begin position="59"/>
        <end position="73"/>
    </location>
</feature>
<feature type="strand" evidence="5">
    <location>
        <begin position="6"/>
        <end position="10"/>
    </location>
</feature>
<feature type="helix" evidence="5">
    <location>
        <begin position="19"/>
        <end position="28"/>
    </location>
</feature>
<feature type="strand" evidence="5">
    <location>
        <begin position="34"/>
        <end position="41"/>
    </location>
</feature>
<feature type="helix" evidence="5">
    <location>
        <begin position="44"/>
        <end position="46"/>
    </location>
</feature>
<feature type="turn" evidence="5">
    <location>
        <begin position="49"/>
        <end position="51"/>
    </location>
</feature>
<feature type="helix" evidence="5">
    <location>
        <begin position="54"/>
        <end position="82"/>
    </location>
</feature>
<feature type="strand" evidence="5">
    <location>
        <begin position="86"/>
        <end position="92"/>
    </location>
</feature>
<feature type="helix" evidence="5">
    <location>
        <begin position="96"/>
        <end position="107"/>
    </location>
</feature>
<feature type="strand" evidence="5">
    <location>
        <begin position="110"/>
        <end position="117"/>
    </location>
</feature>
<feature type="helix" evidence="5">
    <location>
        <begin position="129"/>
        <end position="137"/>
    </location>
</feature>
<feature type="strand" evidence="5">
    <location>
        <begin position="142"/>
        <end position="148"/>
    </location>
</feature>
<feature type="strand" evidence="5">
    <location>
        <begin position="156"/>
        <end position="160"/>
    </location>
</feature>
<feature type="helix" evidence="5">
    <location>
        <begin position="169"/>
        <end position="184"/>
    </location>
</feature>
<feature type="turn" evidence="5">
    <location>
        <begin position="185"/>
        <end position="187"/>
    </location>
</feature>
<feature type="strand" evidence="5">
    <location>
        <begin position="192"/>
        <end position="198"/>
    </location>
</feature>
<feature type="helix" evidence="5">
    <location>
        <begin position="215"/>
        <end position="236"/>
    </location>
</feature>
<feature type="strand" evidence="5">
    <location>
        <begin position="243"/>
        <end position="248"/>
    </location>
</feature>
<feature type="helix" evidence="5">
    <location>
        <begin position="250"/>
        <end position="260"/>
    </location>
</feature>
<feature type="strand" evidence="5">
    <location>
        <begin position="264"/>
        <end position="268"/>
    </location>
</feature>
<feature type="helix" evidence="5">
    <location>
        <begin position="283"/>
        <end position="290"/>
    </location>
</feature>
<feature type="strand" evidence="5">
    <location>
        <begin position="294"/>
        <end position="298"/>
    </location>
</feature>
<proteinExistence type="evidence at protein level"/>
<evidence type="ECO:0000250" key="1"/>
<evidence type="ECO:0000269" key="2">
    <source>
    </source>
</evidence>
<evidence type="ECO:0000269" key="3">
    <source>
    </source>
</evidence>
<evidence type="ECO:0000305" key="4"/>
<evidence type="ECO:0007829" key="5">
    <source>
        <dbReference type="PDB" id="5CB0"/>
    </source>
</evidence>
<reference key="1">
    <citation type="journal article" date="1996" name="DNA Res.">
        <title>A 570-kb DNA sequence of the Escherichia coli K-12 genome corresponding to the 28.0-40.1 min region on the linkage map.</title>
        <authorList>
            <person name="Aiba H."/>
            <person name="Baba T."/>
            <person name="Fujita K."/>
            <person name="Hayashi K."/>
            <person name="Inada T."/>
            <person name="Isono K."/>
            <person name="Itoh T."/>
            <person name="Kasai H."/>
            <person name="Kashimoto K."/>
            <person name="Kimura S."/>
            <person name="Kitakawa M."/>
            <person name="Kitagawa M."/>
            <person name="Makino K."/>
            <person name="Miki T."/>
            <person name="Mizobuchi K."/>
            <person name="Mori H."/>
            <person name="Mori T."/>
            <person name="Motomura K."/>
            <person name="Nakade S."/>
            <person name="Nakamura Y."/>
            <person name="Nashimoto H."/>
            <person name="Nishio Y."/>
            <person name="Oshima T."/>
            <person name="Saito N."/>
            <person name="Sampei G."/>
            <person name="Seki Y."/>
            <person name="Sivasundaram S."/>
            <person name="Tagami H."/>
            <person name="Takeda J."/>
            <person name="Takemoto K."/>
            <person name="Takeuchi Y."/>
            <person name="Wada C."/>
            <person name="Yamamoto Y."/>
            <person name="Horiuchi T."/>
        </authorList>
    </citation>
    <scope>NUCLEOTIDE SEQUENCE [LARGE SCALE GENOMIC DNA]</scope>
    <source>
        <strain>K12 / W3110 / ATCC 27325 / DSM 5911</strain>
    </source>
</reference>
<reference key="2">
    <citation type="journal article" date="1997" name="Science">
        <title>The complete genome sequence of Escherichia coli K-12.</title>
        <authorList>
            <person name="Blattner F.R."/>
            <person name="Plunkett G. III"/>
            <person name="Bloch C.A."/>
            <person name="Perna N.T."/>
            <person name="Burland V."/>
            <person name="Riley M."/>
            <person name="Collado-Vides J."/>
            <person name="Glasner J.D."/>
            <person name="Rode C.K."/>
            <person name="Mayhew G.F."/>
            <person name="Gregor J."/>
            <person name="Davis N.W."/>
            <person name="Kirkpatrick H.A."/>
            <person name="Goeden M.A."/>
            <person name="Rose D.J."/>
            <person name="Mau B."/>
            <person name="Shao Y."/>
        </authorList>
    </citation>
    <scope>NUCLEOTIDE SEQUENCE [LARGE SCALE GENOMIC DNA]</scope>
    <source>
        <strain>K12 / MG1655 / ATCC 47076</strain>
    </source>
</reference>
<reference key="3">
    <citation type="journal article" date="2006" name="Mol. Syst. Biol.">
        <title>Highly accurate genome sequences of Escherichia coli K-12 strains MG1655 and W3110.</title>
        <authorList>
            <person name="Hayashi K."/>
            <person name="Morooka N."/>
            <person name="Yamamoto Y."/>
            <person name="Fujita K."/>
            <person name="Isono K."/>
            <person name="Choi S."/>
            <person name="Ohtsubo E."/>
            <person name="Baba T."/>
            <person name="Wanner B.L."/>
            <person name="Mori H."/>
            <person name="Horiuchi T."/>
        </authorList>
    </citation>
    <scope>NUCLEOTIDE SEQUENCE [LARGE SCALE GENOMIC DNA]</scope>
    <source>
        <strain>K12 / W3110 / ATCC 27325 / DSM 5911</strain>
    </source>
</reference>
<reference key="4">
    <citation type="journal article" date="1982" name="Nucleic Acids Res.">
        <title>Nucleotide sequence of the fnr gene and primary structure of the Enr protein of Escherichia coli.</title>
        <authorList>
            <person name="Shaw D.J."/>
            <person name="Guest J.R."/>
        </authorList>
    </citation>
    <scope>NUCLEOTIDE SEQUENCE [GENOMIC DNA] OF 1-73</scope>
</reference>
<reference key="5">
    <citation type="journal article" date="1998" name="J. Mol. Biol.">
        <title>Protein identification with N and C-terminal sequence tags in proteome projects.</title>
        <authorList>
            <person name="Wilkins M.R."/>
            <person name="Gasteiger E."/>
            <person name="Tonella L."/>
            <person name="Ou K."/>
            <person name="Tyler M."/>
            <person name="Sanchez J.-C."/>
            <person name="Gooley A.A."/>
            <person name="Walsh B.J."/>
            <person name="Bairoch A."/>
            <person name="Appel R.D."/>
            <person name="Williams K.L."/>
            <person name="Hochstrasser D.F."/>
        </authorList>
    </citation>
    <scope>PROTEIN SEQUENCE OF 2-5</scope>
    <source>
        <strain>K12 / W3110 / ATCC 27325 / DSM 5911</strain>
    </source>
</reference>
<reference key="6">
    <citation type="journal article" date="1999" name="Electrophoresis">
        <title>Enrichment of low abundance proteins of Escherichia coli by hydroxyapatite chromatography.</title>
        <authorList>
            <person name="Fountoulakis M."/>
            <person name="Takacs M.-F."/>
            <person name="Berndt P."/>
            <person name="Langen H."/>
            <person name="Takacs B."/>
        </authorList>
    </citation>
    <scope>IDENTIFICATION BY MASS SPECTROMETRY</scope>
    <source>
        <strain>B / BL21</strain>
    </source>
</reference>
<reference key="7">
    <citation type="journal article" date="2002" name="Mol. Microbiol.">
        <title>The universal stress protein paralogues of Escherichia coli are co-ordinately regulated and co-operate in the defence against DNA damage.</title>
        <authorList>
            <person name="Gustavsson N."/>
            <person name="Diez A."/>
            <person name="Nystroem T."/>
        </authorList>
    </citation>
    <scope>FUNCTION</scope>
    <scope>GENE NAME</scope>
    <scope>TRANSCRIPTIONAL REGULATION</scope>
    <source>
        <strain>K12 / MC4100 / ATCC 35695 / DSM 6574</strain>
    </source>
</reference>
<comment type="function">
    <text evidence="2">Required for resistance to DNA-damaging agents.</text>
</comment>
<comment type="subcellular location">
    <subcellularLocation>
        <location evidence="1">Cytoplasm</location>
    </subcellularLocation>
</comment>
<comment type="induction">
    <text evidence="2">During growth inhibition caused by the exhaustion of any of a variety of nutrients (carbon, nitrogen, phosphate, sulfate, required amino acid) or by the presence of a variety of toxic agents. Positively regulated by guanosine 3',5'-bisphosphate (ppGpp) and by a RecA/FtsK-dependent regulatory pathway.</text>
</comment>
<comment type="similarity">
    <text evidence="4">Belongs to the universal stress protein A family.</text>
</comment>
<sequence length="316" mass="35707">MAMYQNMLVVIDPNQDDQPALRRAVYLHQRIGGKIKAFLPIYDFSYEMTTLLSPDERTAMRQGVISQRTAWIHEQAKYYLNAGVPIEIKVVWHNRPFEAIIQEVISGGHDLVLKMAHQHDRLEAVIFTPTDWHLLRKCPSPVWMVKDQPWPEGGKALVAVNLASEEPYHNALNEKLVKETIELAEQVNHTEVHLVGAYPVTPINIAIELPEFDPSVYNDAIRGQHLLAMKALRQKFGINENMTHVEKGLPEEVIPDLAEHLQAGIVVLGTVGRTGISAAFLGNTAEQVIDHLRCDLLVIKPDQYQTPVELDDEEDD</sequence>
<accession>P0AAC0</accession>
<accession>P03807</accession>
<accession>P77421</accession>
<keyword id="KW-0002">3D-structure</keyword>
<keyword id="KW-0963">Cytoplasm</keyword>
<keyword id="KW-0903">Direct protein sequencing</keyword>
<keyword id="KW-1185">Reference proteome</keyword>
<organism>
    <name type="scientific">Escherichia coli (strain K12)</name>
    <dbReference type="NCBI Taxonomy" id="83333"/>
    <lineage>
        <taxon>Bacteria</taxon>
        <taxon>Pseudomonadati</taxon>
        <taxon>Pseudomonadota</taxon>
        <taxon>Gammaproteobacteria</taxon>
        <taxon>Enterobacterales</taxon>
        <taxon>Enterobacteriaceae</taxon>
        <taxon>Escherichia</taxon>
    </lineage>
</organism>
<dbReference type="EMBL" id="U00096">
    <property type="protein sequence ID" value="AAC74415.1"/>
    <property type="molecule type" value="Genomic_DNA"/>
</dbReference>
<dbReference type="EMBL" id="AP009048">
    <property type="protein sequence ID" value="BAA14926.1"/>
    <property type="molecule type" value="Genomic_DNA"/>
</dbReference>
<dbReference type="EMBL" id="J01608">
    <property type="protein sequence ID" value="AAA87982.1"/>
    <property type="molecule type" value="Genomic_DNA"/>
</dbReference>
<dbReference type="PIR" id="H64882">
    <property type="entry name" value="QQECX"/>
</dbReference>
<dbReference type="RefSeq" id="NP_415849.1">
    <property type="nucleotide sequence ID" value="NC_000913.3"/>
</dbReference>
<dbReference type="RefSeq" id="WP_001262123.1">
    <property type="nucleotide sequence ID" value="NZ_STEB01000005.1"/>
</dbReference>
<dbReference type="PDB" id="5CB0">
    <property type="method" value="X-ray"/>
    <property type="resolution" value="3.21 A"/>
    <property type="chains" value="A/B=1-316"/>
</dbReference>
<dbReference type="PDBsum" id="5CB0"/>
<dbReference type="SMR" id="P0AAC0"/>
<dbReference type="BioGRID" id="4260143">
    <property type="interactions" value="14"/>
</dbReference>
<dbReference type="DIP" id="DIP-48118N"/>
<dbReference type="FunCoup" id="P0AAC0">
    <property type="interactions" value="23"/>
</dbReference>
<dbReference type="IntAct" id="P0AAC0">
    <property type="interactions" value="3"/>
</dbReference>
<dbReference type="MINT" id="P0AAC0"/>
<dbReference type="STRING" id="511145.b1333"/>
<dbReference type="jPOST" id="P0AAC0"/>
<dbReference type="PaxDb" id="511145-b1333"/>
<dbReference type="EnsemblBacteria" id="AAC74415">
    <property type="protein sequence ID" value="AAC74415"/>
    <property type="gene ID" value="b1333"/>
</dbReference>
<dbReference type="GeneID" id="93775468"/>
<dbReference type="GeneID" id="945904"/>
<dbReference type="KEGG" id="ecj:JW1327"/>
<dbReference type="KEGG" id="eco:b1333"/>
<dbReference type="KEGG" id="ecoc:C3026_07805"/>
<dbReference type="PATRIC" id="fig|1411691.4.peg.944"/>
<dbReference type="EchoBASE" id="EB1227"/>
<dbReference type="eggNOG" id="COG0589">
    <property type="taxonomic scope" value="Bacteria"/>
</dbReference>
<dbReference type="HOGENOM" id="CLU_049301_1_2_6"/>
<dbReference type="InParanoid" id="P0AAC0"/>
<dbReference type="OMA" id="MAKYQNM"/>
<dbReference type="OrthoDB" id="239260at2"/>
<dbReference type="PhylomeDB" id="P0AAC0"/>
<dbReference type="BioCyc" id="EcoCyc:EG11246-MONOMER"/>
<dbReference type="PRO" id="PR:P0AAC0"/>
<dbReference type="Proteomes" id="UP000000625">
    <property type="component" value="Chromosome"/>
</dbReference>
<dbReference type="GO" id="GO:0005737">
    <property type="term" value="C:cytoplasm"/>
    <property type="evidence" value="ECO:0007669"/>
    <property type="project" value="UniProtKB-SubCell"/>
</dbReference>
<dbReference type="GO" id="GO:0036094">
    <property type="term" value="F:small molecule binding"/>
    <property type="evidence" value="ECO:0000269"/>
    <property type="project" value="DisProt"/>
</dbReference>
<dbReference type="GO" id="GO:0071973">
    <property type="term" value="P:bacterial-type flagellum-dependent cell motility"/>
    <property type="evidence" value="ECO:0000315"/>
    <property type="project" value="EcoCyc"/>
</dbReference>
<dbReference type="GO" id="GO:0070301">
    <property type="term" value="P:cellular response to hydrogen peroxide"/>
    <property type="evidence" value="ECO:0000270"/>
    <property type="project" value="EcoCyc"/>
</dbReference>
<dbReference type="GO" id="GO:0034644">
    <property type="term" value="P:cellular response to UV"/>
    <property type="evidence" value="ECO:0000315"/>
    <property type="project" value="EcoCyc"/>
</dbReference>
<dbReference type="GO" id="GO:0006950">
    <property type="term" value="P:response to stress"/>
    <property type="evidence" value="ECO:0000270"/>
    <property type="project" value="EcoCyc"/>
</dbReference>
<dbReference type="GO" id="GO:0044010">
    <property type="term" value="P:single-species biofilm formation"/>
    <property type="evidence" value="ECO:0000315"/>
    <property type="project" value="EcoCyc"/>
</dbReference>
<dbReference type="CDD" id="cd23943">
    <property type="entry name" value="USP-E_repeat1"/>
    <property type="match status" value="1"/>
</dbReference>
<dbReference type="CDD" id="cd23660">
    <property type="entry name" value="USP-E_repeat2"/>
    <property type="match status" value="1"/>
</dbReference>
<dbReference type="DisProt" id="DP00991"/>
<dbReference type="FunFam" id="3.40.50.12370:FF:000001">
    <property type="entry name" value="Universal stress protein E"/>
    <property type="match status" value="1"/>
</dbReference>
<dbReference type="Gene3D" id="3.40.50.12370">
    <property type="match status" value="1"/>
</dbReference>
<dbReference type="InterPro" id="IPR006016">
    <property type="entry name" value="UspA"/>
</dbReference>
<dbReference type="NCBIfam" id="NF008380">
    <property type="entry name" value="PRK11175.1"/>
    <property type="match status" value="1"/>
</dbReference>
<dbReference type="PANTHER" id="PTHR47892">
    <property type="entry name" value="UNIVERSAL STRESS PROTEIN E"/>
    <property type="match status" value="1"/>
</dbReference>
<dbReference type="PANTHER" id="PTHR47892:SF1">
    <property type="entry name" value="UNIVERSAL STRESS PROTEIN E"/>
    <property type="match status" value="1"/>
</dbReference>
<dbReference type="Pfam" id="PF00582">
    <property type="entry name" value="Usp"/>
    <property type="match status" value="2"/>
</dbReference>
<dbReference type="SUPFAM" id="SSF52402">
    <property type="entry name" value="Adenine nucleotide alpha hydrolases-like"/>
    <property type="match status" value="2"/>
</dbReference>
<protein>
    <recommendedName>
        <fullName>Universal stress protein E</fullName>
    </recommendedName>
</protein>